<accession>B1WTK3</accession>
<proteinExistence type="inferred from homology"/>
<keyword id="KW-0028">Amino-acid biosynthesis</keyword>
<keyword id="KW-0055">Arginine biosynthesis</keyword>
<keyword id="KW-0067">ATP-binding</keyword>
<keyword id="KW-0963">Cytoplasm</keyword>
<keyword id="KW-0436">Ligase</keyword>
<keyword id="KW-0547">Nucleotide-binding</keyword>
<keyword id="KW-1185">Reference proteome</keyword>
<sequence>MGRAKKVVLAYSGGVDTSVCIPYLKHEWGVDEVITLAADLGQGDELGPIQAKALKSGAVESLVEDATAEFVTDYAFKAIKANALYESRYPLSTALARPLIAKLLVEAAEKYGADAVAHGCTAKGNDQVRFDLGILALNPTLKVLAPAREWKMSREQTIAYGEKFGLDFPVKKSSPFSIDRNLLGRSIEAGPLEDPMTEPPEEIYLMTKAIADTPDTPEYVEIGFEKGLPVSLNGQTLDPVTLISQLNDVVGKHGVGRIDMIENRVVGIKSREIYEAPALLVLIDAHRDLESLTLTSDVTHYKKGVEETYSHLIYRGLWYSPLKESLDAFIDHTQERVNGTVRIKLFKGNANIVGRQSDYSIYSPNLATYGEDDHFDHKAAEGFIYIWGLPTRVWAEKTKG</sequence>
<dbReference type="EC" id="6.3.4.5" evidence="1"/>
<dbReference type="EMBL" id="CP000806">
    <property type="protein sequence ID" value="ACB53718.1"/>
    <property type="molecule type" value="Genomic_DNA"/>
</dbReference>
<dbReference type="RefSeq" id="WP_009543572.1">
    <property type="nucleotide sequence ID" value="NC_010546.1"/>
</dbReference>
<dbReference type="SMR" id="B1WTK3"/>
<dbReference type="STRING" id="43989.cce_4370"/>
<dbReference type="KEGG" id="cyt:cce_4370"/>
<dbReference type="eggNOG" id="COG0137">
    <property type="taxonomic scope" value="Bacteria"/>
</dbReference>
<dbReference type="HOGENOM" id="CLU_032784_4_2_3"/>
<dbReference type="OrthoDB" id="9801641at2"/>
<dbReference type="UniPathway" id="UPA00068">
    <property type="reaction ID" value="UER00113"/>
</dbReference>
<dbReference type="Proteomes" id="UP000001203">
    <property type="component" value="Chromosome circular"/>
</dbReference>
<dbReference type="GO" id="GO:0005737">
    <property type="term" value="C:cytoplasm"/>
    <property type="evidence" value="ECO:0007669"/>
    <property type="project" value="UniProtKB-SubCell"/>
</dbReference>
<dbReference type="GO" id="GO:0004055">
    <property type="term" value="F:argininosuccinate synthase activity"/>
    <property type="evidence" value="ECO:0007669"/>
    <property type="project" value="UniProtKB-UniRule"/>
</dbReference>
<dbReference type="GO" id="GO:0005524">
    <property type="term" value="F:ATP binding"/>
    <property type="evidence" value="ECO:0007669"/>
    <property type="project" value="UniProtKB-UniRule"/>
</dbReference>
<dbReference type="GO" id="GO:0000053">
    <property type="term" value="P:argininosuccinate metabolic process"/>
    <property type="evidence" value="ECO:0007669"/>
    <property type="project" value="TreeGrafter"/>
</dbReference>
<dbReference type="GO" id="GO:0006526">
    <property type="term" value="P:L-arginine biosynthetic process"/>
    <property type="evidence" value="ECO:0007669"/>
    <property type="project" value="UniProtKB-UniRule"/>
</dbReference>
<dbReference type="GO" id="GO:0000050">
    <property type="term" value="P:urea cycle"/>
    <property type="evidence" value="ECO:0007669"/>
    <property type="project" value="TreeGrafter"/>
</dbReference>
<dbReference type="CDD" id="cd01999">
    <property type="entry name" value="ASS"/>
    <property type="match status" value="1"/>
</dbReference>
<dbReference type="FunFam" id="1.20.5.470:FF:000002">
    <property type="entry name" value="Argininosuccinate synthase"/>
    <property type="match status" value="1"/>
</dbReference>
<dbReference type="FunFam" id="3.40.50.620:FF:000019">
    <property type="entry name" value="Argininosuccinate synthase"/>
    <property type="match status" value="1"/>
</dbReference>
<dbReference type="FunFam" id="3.90.1260.10:FF:000007">
    <property type="entry name" value="Argininosuccinate synthase"/>
    <property type="match status" value="1"/>
</dbReference>
<dbReference type="Gene3D" id="3.90.1260.10">
    <property type="entry name" value="Argininosuccinate synthetase, chain A, domain 2"/>
    <property type="match status" value="1"/>
</dbReference>
<dbReference type="Gene3D" id="3.40.50.620">
    <property type="entry name" value="HUPs"/>
    <property type="match status" value="1"/>
</dbReference>
<dbReference type="Gene3D" id="1.20.5.470">
    <property type="entry name" value="Single helix bin"/>
    <property type="match status" value="1"/>
</dbReference>
<dbReference type="HAMAP" id="MF_00005">
    <property type="entry name" value="Arg_succ_synth_type1"/>
    <property type="match status" value="1"/>
</dbReference>
<dbReference type="InterPro" id="IPR048268">
    <property type="entry name" value="Arginosuc_syn_C"/>
</dbReference>
<dbReference type="InterPro" id="IPR048267">
    <property type="entry name" value="Arginosuc_syn_N"/>
</dbReference>
<dbReference type="InterPro" id="IPR001518">
    <property type="entry name" value="Arginosuc_synth"/>
</dbReference>
<dbReference type="InterPro" id="IPR018223">
    <property type="entry name" value="Arginosuc_synth_CS"/>
</dbReference>
<dbReference type="InterPro" id="IPR023434">
    <property type="entry name" value="Arginosuc_synth_type_1_subfam"/>
</dbReference>
<dbReference type="InterPro" id="IPR024074">
    <property type="entry name" value="AS_cat/multimer_dom_body"/>
</dbReference>
<dbReference type="InterPro" id="IPR014729">
    <property type="entry name" value="Rossmann-like_a/b/a_fold"/>
</dbReference>
<dbReference type="NCBIfam" id="TIGR00032">
    <property type="entry name" value="argG"/>
    <property type="match status" value="1"/>
</dbReference>
<dbReference type="NCBIfam" id="NF001770">
    <property type="entry name" value="PRK00509.1"/>
    <property type="match status" value="1"/>
</dbReference>
<dbReference type="PANTHER" id="PTHR11587">
    <property type="entry name" value="ARGININOSUCCINATE SYNTHASE"/>
    <property type="match status" value="1"/>
</dbReference>
<dbReference type="PANTHER" id="PTHR11587:SF2">
    <property type="entry name" value="ARGININOSUCCINATE SYNTHASE"/>
    <property type="match status" value="1"/>
</dbReference>
<dbReference type="Pfam" id="PF20979">
    <property type="entry name" value="Arginosuc_syn_C"/>
    <property type="match status" value="1"/>
</dbReference>
<dbReference type="Pfam" id="PF00764">
    <property type="entry name" value="Arginosuc_synth"/>
    <property type="match status" value="1"/>
</dbReference>
<dbReference type="SUPFAM" id="SSF52402">
    <property type="entry name" value="Adenine nucleotide alpha hydrolases-like"/>
    <property type="match status" value="1"/>
</dbReference>
<dbReference type="SUPFAM" id="SSF69864">
    <property type="entry name" value="Argininosuccinate synthetase, C-terminal domain"/>
    <property type="match status" value="1"/>
</dbReference>
<dbReference type="PROSITE" id="PS00564">
    <property type="entry name" value="ARGININOSUCCIN_SYN_1"/>
    <property type="match status" value="1"/>
</dbReference>
<dbReference type="PROSITE" id="PS00565">
    <property type="entry name" value="ARGININOSUCCIN_SYN_2"/>
    <property type="match status" value="1"/>
</dbReference>
<comment type="catalytic activity">
    <reaction evidence="1">
        <text>L-citrulline + L-aspartate + ATP = 2-(N(omega)-L-arginino)succinate + AMP + diphosphate + H(+)</text>
        <dbReference type="Rhea" id="RHEA:10932"/>
        <dbReference type="ChEBI" id="CHEBI:15378"/>
        <dbReference type="ChEBI" id="CHEBI:29991"/>
        <dbReference type="ChEBI" id="CHEBI:30616"/>
        <dbReference type="ChEBI" id="CHEBI:33019"/>
        <dbReference type="ChEBI" id="CHEBI:57472"/>
        <dbReference type="ChEBI" id="CHEBI:57743"/>
        <dbReference type="ChEBI" id="CHEBI:456215"/>
        <dbReference type="EC" id="6.3.4.5"/>
    </reaction>
</comment>
<comment type="pathway">
    <text evidence="1">Amino-acid biosynthesis; L-arginine biosynthesis; L-arginine from L-ornithine and carbamoyl phosphate: step 2/3.</text>
</comment>
<comment type="subunit">
    <text evidence="1">Homotetramer.</text>
</comment>
<comment type="subcellular location">
    <subcellularLocation>
        <location evidence="1">Cytoplasm</location>
    </subcellularLocation>
</comment>
<comment type="similarity">
    <text evidence="1">Belongs to the argininosuccinate synthase family. Type 1 subfamily.</text>
</comment>
<protein>
    <recommendedName>
        <fullName evidence="1">Argininosuccinate synthase</fullName>
        <ecNumber evidence="1">6.3.4.5</ecNumber>
    </recommendedName>
    <alternativeName>
        <fullName evidence="1">Citrulline--aspartate ligase</fullName>
    </alternativeName>
</protein>
<gene>
    <name evidence="1" type="primary">argG</name>
    <name type="ordered locus">cce_4370</name>
</gene>
<evidence type="ECO:0000255" key="1">
    <source>
        <dbReference type="HAMAP-Rule" id="MF_00005"/>
    </source>
</evidence>
<reference key="1">
    <citation type="journal article" date="2008" name="Proc. Natl. Acad. Sci. U.S.A.">
        <title>The genome of Cyanothece 51142, a unicellular diazotrophic cyanobacterium important in the marine nitrogen cycle.</title>
        <authorList>
            <person name="Welsh E.A."/>
            <person name="Liberton M."/>
            <person name="Stoeckel J."/>
            <person name="Loh T."/>
            <person name="Elvitigala T."/>
            <person name="Wang C."/>
            <person name="Wollam A."/>
            <person name="Fulton R.S."/>
            <person name="Clifton S.W."/>
            <person name="Jacobs J.M."/>
            <person name="Aurora R."/>
            <person name="Ghosh B.K."/>
            <person name="Sherman L.A."/>
            <person name="Smith R.D."/>
            <person name="Wilson R.K."/>
            <person name="Pakrasi H.B."/>
        </authorList>
    </citation>
    <scope>NUCLEOTIDE SEQUENCE [LARGE SCALE GENOMIC DNA]</scope>
    <source>
        <strain>ATCC 51142 / BH68</strain>
    </source>
</reference>
<organism>
    <name type="scientific">Crocosphaera subtropica (strain ATCC 51142 / BH68)</name>
    <name type="common">Cyanothece sp. (strain ATCC 51142)</name>
    <dbReference type="NCBI Taxonomy" id="43989"/>
    <lineage>
        <taxon>Bacteria</taxon>
        <taxon>Bacillati</taxon>
        <taxon>Cyanobacteriota</taxon>
        <taxon>Cyanophyceae</taxon>
        <taxon>Oscillatoriophycideae</taxon>
        <taxon>Chroococcales</taxon>
        <taxon>Aphanothecaceae</taxon>
        <taxon>Crocosphaera</taxon>
        <taxon>Crocosphaera subtropica</taxon>
    </lineage>
</organism>
<name>ASSY_CROS5</name>
<feature type="chain" id="PRO_1000089034" description="Argininosuccinate synthase">
    <location>
        <begin position="1"/>
        <end position="400"/>
    </location>
</feature>
<feature type="binding site" evidence="1">
    <location>
        <begin position="10"/>
        <end position="18"/>
    </location>
    <ligand>
        <name>ATP</name>
        <dbReference type="ChEBI" id="CHEBI:30616"/>
    </ligand>
</feature>
<feature type="binding site" evidence="1">
    <location>
        <position position="38"/>
    </location>
    <ligand>
        <name>ATP</name>
        <dbReference type="ChEBI" id="CHEBI:30616"/>
    </ligand>
</feature>
<feature type="binding site" evidence="1">
    <location>
        <position position="89"/>
    </location>
    <ligand>
        <name>L-citrulline</name>
        <dbReference type="ChEBI" id="CHEBI:57743"/>
    </ligand>
</feature>
<feature type="binding site" evidence="1">
    <location>
        <position position="119"/>
    </location>
    <ligand>
        <name>ATP</name>
        <dbReference type="ChEBI" id="CHEBI:30616"/>
    </ligand>
</feature>
<feature type="binding site" evidence="1">
    <location>
        <position position="121"/>
    </location>
    <ligand>
        <name>L-aspartate</name>
        <dbReference type="ChEBI" id="CHEBI:29991"/>
    </ligand>
</feature>
<feature type="binding site" evidence="1">
    <location>
        <position position="125"/>
    </location>
    <ligand>
        <name>L-aspartate</name>
        <dbReference type="ChEBI" id="CHEBI:29991"/>
    </ligand>
</feature>
<feature type="binding site" evidence="1">
    <location>
        <position position="125"/>
    </location>
    <ligand>
        <name>L-citrulline</name>
        <dbReference type="ChEBI" id="CHEBI:57743"/>
    </ligand>
</feature>
<feature type="binding site" evidence="1">
    <location>
        <position position="126"/>
    </location>
    <ligand>
        <name>L-aspartate</name>
        <dbReference type="ChEBI" id="CHEBI:29991"/>
    </ligand>
</feature>
<feature type="binding site" evidence="1">
    <location>
        <position position="129"/>
    </location>
    <ligand>
        <name>L-citrulline</name>
        <dbReference type="ChEBI" id="CHEBI:57743"/>
    </ligand>
</feature>
<feature type="binding site" evidence="1">
    <location>
        <position position="177"/>
    </location>
    <ligand>
        <name>L-citrulline</name>
        <dbReference type="ChEBI" id="CHEBI:57743"/>
    </ligand>
</feature>
<feature type="binding site" evidence="1">
    <location>
        <position position="186"/>
    </location>
    <ligand>
        <name>L-citrulline</name>
        <dbReference type="ChEBI" id="CHEBI:57743"/>
    </ligand>
</feature>
<feature type="binding site" evidence="1">
    <location>
        <position position="262"/>
    </location>
    <ligand>
        <name>L-citrulline</name>
        <dbReference type="ChEBI" id="CHEBI:57743"/>
    </ligand>
</feature>
<feature type="binding site" evidence="1">
    <location>
        <position position="274"/>
    </location>
    <ligand>
        <name>L-citrulline</name>
        <dbReference type="ChEBI" id="CHEBI:57743"/>
    </ligand>
</feature>